<feature type="chain" id="PRO_1000149582" description="Glycerol-3-phosphate acyltransferase">
    <location>
        <begin position="1"/>
        <end position="202"/>
    </location>
</feature>
<feature type="transmembrane region" description="Helical" evidence="1">
    <location>
        <begin position="2"/>
        <end position="22"/>
    </location>
</feature>
<feature type="transmembrane region" description="Helical" evidence="1">
    <location>
        <begin position="54"/>
        <end position="74"/>
    </location>
</feature>
<feature type="transmembrane region" description="Helical" evidence="1">
    <location>
        <begin position="85"/>
        <end position="105"/>
    </location>
</feature>
<feature type="transmembrane region" description="Helical" evidence="1">
    <location>
        <begin position="118"/>
        <end position="138"/>
    </location>
</feature>
<feature type="transmembrane region" description="Helical" evidence="1">
    <location>
        <begin position="140"/>
        <end position="160"/>
    </location>
</feature>
<feature type="transmembrane region" description="Helical" evidence="1">
    <location>
        <begin position="162"/>
        <end position="182"/>
    </location>
</feature>
<accession>B9DP57</accession>
<comment type="function">
    <text evidence="1">Catalyzes the transfer of an acyl group from acyl-phosphate (acyl-PO(4)) to glycerol-3-phosphate (G3P) to form lysophosphatidic acid (LPA). This enzyme utilizes acyl-phosphate as fatty acyl donor, but not acyl-CoA or acyl-ACP.</text>
</comment>
<comment type="catalytic activity">
    <reaction evidence="1">
        <text>an acyl phosphate + sn-glycerol 3-phosphate = a 1-acyl-sn-glycero-3-phosphate + phosphate</text>
        <dbReference type="Rhea" id="RHEA:34075"/>
        <dbReference type="ChEBI" id="CHEBI:43474"/>
        <dbReference type="ChEBI" id="CHEBI:57597"/>
        <dbReference type="ChEBI" id="CHEBI:57970"/>
        <dbReference type="ChEBI" id="CHEBI:59918"/>
        <dbReference type="EC" id="2.3.1.275"/>
    </reaction>
</comment>
<comment type="pathway">
    <text evidence="1">Lipid metabolism; phospholipid metabolism.</text>
</comment>
<comment type="subunit">
    <text evidence="1">Probably interacts with PlsX.</text>
</comment>
<comment type="subcellular location">
    <subcellularLocation>
        <location evidence="1">Cell membrane</location>
        <topology evidence="1">Multi-pass membrane protein</topology>
    </subcellularLocation>
</comment>
<comment type="similarity">
    <text evidence="1">Belongs to the PlsY family.</text>
</comment>
<name>PLSY_STACT</name>
<sequence>MMIVLMLLLAYIVGSFPSGVIIGKIFFKKDIRQFGSGNTGATNSFRVLGRPAGFVVTFLDIFKGFIVVFFPLLFPVHPTGPISEFFTNGLIVGVFAILGHVYPIFLKFHGGKAVATSAGVVLGVAPILLLILAAIFFLTLYLTKYVSLSSIVAAICCVIGSLIIHDYILLVVSIIVAILLIFRHRTNIVRIFKGEEPKIKWM</sequence>
<reference key="1">
    <citation type="journal article" date="2009" name="Appl. Environ. Microbiol.">
        <title>Genome analysis of the meat starter culture bacterium Staphylococcus carnosus TM300.</title>
        <authorList>
            <person name="Rosenstein R."/>
            <person name="Nerz C."/>
            <person name="Biswas L."/>
            <person name="Resch A."/>
            <person name="Raddatz G."/>
            <person name="Schuster S.C."/>
            <person name="Goetz F."/>
        </authorList>
    </citation>
    <scope>NUCLEOTIDE SEQUENCE [LARGE SCALE GENOMIC DNA]</scope>
    <source>
        <strain>TM300</strain>
    </source>
</reference>
<evidence type="ECO:0000255" key="1">
    <source>
        <dbReference type="HAMAP-Rule" id="MF_01043"/>
    </source>
</evidence>
<protein>
    <recommendedName>
        <fullName evidence="1">Glycerol-3-phosphate acyltransferase</fullName>
    </recommendedName>
    <alternativeName>
        <fullName evidence="1">Acyl-PO4 G3P acyltransferase</fullName>
    </alternativeName>
    <alternativeName>
        <fullName evidence="1">Acyl-phosphate--glycerol-3-phosphate acyltransferase</fullName>
    </alternativeName>
    <alternativeName>
        <fullName evidence="1">G3P acyltransferase</fullName>
        <shortName evidence="1">GPAT</shortName>
        <ecNumber evidence="1">2.3.1.275</ecNumber>
    </alternativeName>
    <alternativeName>
        <fullName evidence="1">Lysophosphatidic acid synthase</fullName>
        <shortName evidence="1">LPA synthase</shortName>
    </alternativeName>
</protein>
<organism>
    <name type="scientific">Staphylococcus carnosus (strain TM300)</name>
    <dbReference type="NCBI Taxonomy" id="396513"/>
    <lineage>
        <taxon>Bacteria</taxon>
        <taxon>Bacillati</taxon>
        <taxon>Bacillota</taxon>
        <taxon>Bacilli</taxon>
        <taxon>Bacillales</taxon>
        <taxon>Staphylococcaceae</taxon>
        <taxon>Staphylococcus</taxon>
    </lineage>
</organism>
<gene>
    <name evidence="1" type="primary">plsY</name>
    <name type="ordered locus">Sca_0994</name>
</gene>
<proteinExistence type="inferred from homology"/>
<keyword id="KW-1003">Cell membrane</keyword>
<keyword id="KW-0444">Lipid biosynthesis</keyword>
<keyword id="KW-0443">Lipid metabolism</keyword>
<keyword id="KW-0472">Membrane</keyword>
<keyword id="KW-0594">Phospholipid biosynthesis</keyword>
<keyword id="KW-1208">Phospholipid metabolism</keyword>
<keyword id="KW-1185">Reference proteome</keyword>
<keyword id="KW-0808">Transferase</keyword>
<keyword id="KW-0812">Transmembrane</keyword>
<keyword id="KW-1133">Transmembrane helix</keyword>
<dbReference type="EC" id="2.3.1.275" evidence="1"/>
<dbReference type="EMBL" id="AM295250">
    <property type="protein sequence ID" value="CAL27902.1"/>
    <property type="molecule type" value="Genomic_DNA"/>
</dbReference>
<dbReference type="RefSeq" id="WP_015900243.1">
    <property type="nucleotide sequence ID" value="NC_012121.1"/>
</dbReference>
<dbReference type="SMR" id="B9DP57"/>
<dbReference type="GeneID" id="93793420"/>
<dbReference type="KEGG" id="sca:SCA_0994"/>
<dbReference type="eggNOG" id="COG0344">
    <property type="taxonomic scope" value="Bacteria"/>
</dbReference>
<dbReference type="HOGENOM" id="CLU_081254_4_0_9"/>
<dbReference type="OrthoDB" id="9777124at2"/>
<dbReference type="BioCyc" id="SCAR396513:SCA_RS04990-MONOMER"/>
<dbReference type="UniPathway" id="UPA00085"/>
<dbReference type="Proteomes" id="UP000000444">
    <property type="component" value="Chromosome"/>
</dbReference>
<dbReference type="GO" id="GO:0005886">
    <property type="term" value="C:plasma membrane"/>
    <property type="evidence" value="ECO:0007669"/>
    <property type="project" value="UniProtKB-SubCell"/>
</dbReference>
<dbReference type="GO" id="GO:0043772">
    <property type="term" value="F:acyl-phosphate glycerol-3-phosphate acyltransferase activity"/>
    <property type="evidence" value="ECO:0007669"/>
    <property type="project" value="UniProtKB-UniRule"/>
</dbReference>
<dbReference type="GO" id="GO:0008654">
    <property type="term" value="P:phospholipid biosynthetic process"/>
    <property type="evidence" value="ECO:0007669"/>
    <property type="project" value="UniProtKB-UniRule"/>
</dbReference>
<dbReference type="HAMAP" id="MF_01043">
    <property type="entry name" value="PlsY"/>
    <property type="match status" value="1"/>
</dbReference>
<dbReference type="InterPro" id="IPR003811">
    <property type="entry name" value="G3P_acylTferase_PlsY"/>
</dbReference>
<dbReference type="NCBIfam" id="TIGR00023">
    <property type="entry name" value="glycerol-3-phosphate 1-O-acyltransferase PlsY"/>
    <property type="match status" value="1"/>
</dbReference>
<dbReference type="PANTHER" id="PTHR30309:SF0">
    <property type="entry name" value="GLYCEROL-3-PHOSPHATE ACYLTRANSFERASE-RELATED"/>
    <property type="match status" value="1"/>
</dbReference>
<dbReference type="PANTHER" id="PTHR30309">
    <property type="entry name" value="INNER MEMBRANE PROTEIN YGIH"/>
    <property type="match status" value="1"/>
</dbReference>
<dbReference type="Pfam" id="PF02660">
    <property type="entry name" value="G3P_acyltransf"/>
    <property type="match status" value="1"/>
</dbReference>
<dbReference type="SMART" id="SM01207">
    <property type="entry name" value="G3P_acyltransf"/>
    <property type="match status" value="1"/>
</dbReference>